<keyword id="KW-0408">Iron</keyword>
<keyword id="KW-0479">Metal-binding</keyword>
<keyword id="KW-0560">Oxidoreductase</keyword>
<evidence type="ECO:0000255" key="1">
    <source>
        <dbReference type="PROSITE-ProRule" id="PRU00805"/>
    </source>
</evidence>
<evidence type="ECO:0000269" key="2">
    <source>
    </source>
</evidence>
<evidence type="ECO:0000303" key="3">
    <source>
    </source>
</evidence>
<evidence type="ECO:0000305" key="4"/>
<evidence type="ECO:0000305" key="5">
    <source>
    </source>
</evidence>
<feature type="chain" id="PRO_0000461382" description="Azadirone synthase LFS">
    <location>
        <begin position="1"/>
        <end position="332"/>
    </location>
</feature>
<feature type="domain" description="Fe2OG dioxygenase" evidence="1">
    <location>
        <begin position="181"/>
        <end position="286"/>
    </location>
</feature>
<feature type="binding site" evidence="1">
    <location>
        <position position="208"/>
    </location>
    <ligand>
        <name>Fe cation</name>
        <dbReference type="ChEBI" id="CHEBI:24875"/>
    </ligand>
</feature>
<feature type="binding site" evidence="1">
    <location>
        <position position="210"/>
    </location>
    <ligand>
        <name>Fe cation</name>
        <dbReference type="ChEBI" id="CHEBI:24875"/>
    </ligand>
</feature>
<feature type="binding site" evidence="1">
    <location>
        <position position="269"/>
    </location>
    <ligand>
        <name>Fe cation</name>
        <dbReference type="ChEBI" id="CHEBI:24875"/>
    </ligand>
</feature>
<feature type="binding site" evidence="1">
    <location>
        <position position="277"/>
    </location>
    <ligand>
        <name>2-oxoglutarate</name>
        <dbReference type="ChEBI" id="CHEBI:16810"/>
    </ligand>
</feature>
<proteinExistence type="evidence at protein level"/>
<name>LFS_MELAZ</name>
<protein>
    <recommendedName>
        <fullName evidence="5">Azadirone synthase LFS</fullName>
        <ecNumber evidence="1 2">1.14.11.-</ecNumber>
    </recommendedName>
    <alternativeName>
        <fullName evidence="3">Limonoid furan synthase 2-ODD-like</fullName>
        <shortName evidence="3">MaLFS</shortName>
    </alternativeName>
</protein>
<gene>
    <name evidence="3" type="primary">LFS</name>
</gene>
<reference key="1">
    <citation type="journal article" date="2023" name="Science">
        <title>Complex scaffold remodeling in plant triterpene biosynthesis.</title>
        <authorList>
            <person name="De La Pena R."/>
            <person name="Hodgson H."/>
            <person name="Liu J.C."/>
            <person name="Stephenson M.J."/>
            <person name="Martin A.C."/>
            <person name="Owen C."/>
            <person name="Harkess A."/>
            <person name="Leebens-Mack J."/>
            <person name="Jimenez L.E."/>
            <person name="Osbourn A."/>
            <person name="Sattely E.S."/>
        </authorList>
    </citation>
    <scope>NUCLEOTIDE SEQUENCE [MRNA]</scope>
    <scope>FUNCTION</scope>
    <scope>CATALYTIC ACTIVITY</scope>
    <scope>PATHWAY</scope>
    <scope>TISSUE SPECIFICITY</scope>
    <source>
        <strain>cv. Valencia</strain>
    </source>
</reference>
<comment type="function">
    <text evidence="2">2-oxoglutarate-Fe(II) type oxidoreductase involved in the biosynthesis of limonoids triterpene natural products such as azadirachtin, an antifeedant widely used as bioinsecticide, and possessing many medicinal applications including anti-tumoral, anti-malarial, anti-rheumatic, antibacterial, anti-inflammatory, anti-pyretic and diuretic effects (PubMed:36701471). Catalyzes the formation of azadirone (PubMed:36701471).</text>
</comment>
<comment type="catalytic activity">
    <reaction evidence="2">
        <text>(1S,3bR,4R,5aR,9aR,9bR,11aS)-1-(1-hydroxy-4-oxobutan-2-yl)-3b,6,6,9a,11a-pentamethyl-7-oxo-1H,2H,3bH,4H,5H,5aH,6H,7H,9aH,9bH,10H,11H,11aH-cyclopenta[a]phenanthren-4-yl acetate + 2-oxoglutarate + O2 = azadirone + succinate + CO2 + 2 H2O</text>
        <dbReference type="Rhea" id="RHEA:80387"/>
        <dbReference type="ChEBI" id="CHEBI:15377"/>
        <dbReference type="ChEBI" id="CHEBI:15379"/>
        <dbReference type="ChEBI" id="CHEBI:16526"/>
        <dbReference type="ChEBI" id="CHEBI:16810"/>
        <dbReference type="ChEBI" id="CHEBI:30031"/>
        <dbReference type="ChEBI" id="CHEBI:76293"/>
        <dbReference type="ChEBI" id="CHEBI:231473"/>
    </reaction>
    <physiologicalReaction direction="left-to-right" evidence="2">
        <dbReference type="Rhea" id="RHEA:80388"/>
    </physiologicalReaction>
</comment>
<comment type="cofactor">
    <cofactor evidence="1">
        <name>Fe(2+)</name>
        <dbReference type="ChEBI" id="CHEBI:29033"/>
    </cofactor>
    <text evidence="1">Binds 1 Fe(2+) ion per subunit.</text>
</comment>
<comment type="pathway">
    <text evidence="2">Secondary metabolite biosynthesis; terpenoid biosynthesis.</text>
</comment>
<comment type="tissue specificity">
    <text evidence="2">Mainly expressed in petioles and, to a lower extent, in roots.</text>
</comment>
<comment type="similarity">
    <text evidence="4">Belongs to the iron/ascorbate-dependent oxidoreductase family.</text>
</comment>
<dbReference type="EC" id="1.14.11.-" evidence="1 2"/>
<dbReference type="EMBL" id="OP947604">
    <property type="protein sequence ID" value="WBW48729.1"/>
    <property type="molecule type" value="mRNA"/>
</dbReference>
<dbReference type="SMR" id="P0DXH9"/>
<dbReference type="UniPathway" id="UPA00213"/>
<dbReference type="GO" id="GO:0051213">
    <property type="term" value="F:dioxygenase activity"/>
    <property type="evidence" value="ECO:0007669"/>
    <property type="project" value="UniProtKB-ARBA"/>
</dbReference>
<dbReference type="GO" id="GO:0046872">
    <property type="term" value="F:metal ion binding"/>
    <property type="evidence" value="ECO:0007669"/>
    <property type="project" value="UniProtKB-KW"/>
</dbReference>
<dbReference type="GO" id="GO:0009058">
    <property type="term" value="P:biosynthetic process"/>
    <property type="evidence" value="ECO:0007669"/>
    <property type="project" value="UniProtKB-ARBA"/>
</dbReference>
<dbReference type="Gene3D" id="2.60.120.330">
    <property type="entry name" value="B-lactam Antibiotic, Isopenicillin N Synthase, Chain"/>
    <property type="match status" value="1"/>
</dbReference>
<dbReference type="InterPro" id="IPR026992">
    <property type="entry name" value="DIOX_N"/>
</dbReference>
<dbReference type="InterPro" id="IPR044861">
    <property type="entry name" value="IPNS-like_FE2OG_OXY"/>
</dbReference>
<dbReference type="InterPro" id="IPR027443">
    <property type="entry name" value="IPNS-like_sf"/>
</dbReference>
<dbReference type="InterPro" id="IPR005123">
    <property type="entry name" value="Oxoglu/Fe-dep_dioxygenase_dom"/>
</dbReference>
<dbReference type="PANTHER" id="PTHR10209:SF867">
    <property type="entry name" value="2-OXOGLUTARATE (2OG) AND FE(II)-DEPENDENT OXYGENASE SUPERFAMILY PROTEIN"/>
    <property type="match status" value="1"/>
</dbReference>
<dbReference type="PANTHER" id="PTHR10209">
    <property type="entry name" value="OXIDOREDUCTASE, 2OG-FE II OXYGENASE FAMILY PROTEIN"/>
    <property type="match status" value="1"/>
</dbReference>
<dbReference type="Pfam" id="PF03171">
    <property type="entry name" value="2OG-FeII_Oxy"/>
    <property type="match status" value="1"/>
</dbReference>
<dbReference type="Pfam" id="PF14226">
    <property type="entry name" value="DIOX_N"/>
    <property type="match status" value="1"/>
</dbReference>
<dbReference type="PRINTS" id="PR00682">
    <property type="entry name" value="IPNSYNTHASE"/>
</dbReference>
<dbReference type="SUPFAM" id="SSF51197">
    <property type="entry name" value="Clavaminate synthase-like"/>
    <property type="match status" value="1"/>
</dbReference>
<dbReference type="PROSITE" id="PS51471">
    <property type="entry name" value="FE2OG_OXY"/>
    <property type="match status" value="1"/>
</dbReference>
<accession>P0DXH9</accession>
<sequence length="332" mass="37738">MADHLTANGEEMGVYNLQCIDLSNPDIHESAALLRKACMESGIFYVINHGISQEFMDETFAQFKRFFDLPIEEKMKLVWNKNLRGYRPPIQAVIDDKTKQKDFSEAFHIGVEVSEDDPNAHDFFYGPNLWPPADLLPGWRKAMEKYHQEATNVARKIGRVIAVALDLNEDFFVQPELIGSANANYTNMFHYGVHGANLLKDVVGTTPHCDLNLFTLLATDDIWGLQICREKNAESQVWEAIAPVKGAYIVNVGDMLEMLTNGIFRSILHRVVFNQERYSTGTFICPNHDYIIKCLPTCTSEENPPKYPTMRTGQYIYNRFNQLSASTVGKKA</sequence>
<organism>
    <name type="scientific">Melia azedarach</name>
    <name type="common">Chinaberry tree</name>
    <dbReference type="NCBI Taxonomy" id="155640"/>
    <lineage>
        <taxon>Eukaryota</taxon>
        <taxon>Viridiplantae</taxon>
        <taxon>Streptophyta</taxon>
        <taxon>Embryophyta</taxon>
        <taxon>Tracheophyta</taxon>
        <taxon>Spermatophyta</taxon>
        <taxon>Magnoliopsida</taxon>
        <taxon>eudicotyledons</taxon>
        <taxon>Gunneridae</taxon>
        <taxon>Pentapetalae</taxon>
        <taxon>rosids</taxon>
        <taxon>malvids</taxon>
        <taxon>Sapindales</taxon>
        <taxon>Meliaceae</taxon>
        <taxon>Melia</taxon>
    </lineage>
</organism>